<organism>
    <name type="scientific">Vaccinia virus (strain Ankara)</name>
    <name type="common">VACV</name>
    <dbReference type="NCBI Taxonomy" id="126794"/>
    <lineage>
        <taxon>Viruses</taxon>
        <taxon>Varidnaviria</taxon>
        <taxon>Bamfordvirae</taxon>
        <taxon>Nucleocytoviricota</taxon>
        <taxon>Pokkesviricetes</taxon>
        <taxon>Chitovirales</taxon>
        <taxon>Poxviridae</taxon>
        <taxon>Chordopoxvirinae</taxon>
        <taxon>Orthopoxvirus</taxon>
        <taxon>Vaccinia virus</taxon>
    </lineage>
</organism>
<proteinExistence type="inferred from homology"/>
<protein>
    <recommendedName>
        <fullName>Entry-fusion complex protein OPG094</fullName>
        <shortName>EFC protein OPG094</shortName>
    </recommendedName>
    <alternativeName>
        <fullName>Protein L5</fullName>
    </alternativeName>
</protein>
<organismHost>
    <name type="scientific">Homo sapiens</name>
    <name type="common">Human</name>
    <dbReference type="NCBI Taxonomy" id="9606"/>
</organismHost>
<comment type="function">
    <text evidence="1">Component of the entry fusion complex (EFC), which consists of 11 proteins. During cell infection, this complex mediates entry of the virion core into the host cytoplasm by a two-step mechanism consisting of lipid mixing of the viral and cellular membranes and subsequent pore formation.</text>
</comment>
<comment type="subunit">
    <text evidence="1">Interacts with OPG086. Component of the entry fusion complex (EFC) composed of OPG053, OPG076, OPG086, OPG094, OPG095, OPG099, OPG107, OPG143, OPG104J5, OPG147 and OPG155. Except for OPG095 and OPG053, each of the EFC proteins is required for assembly or stability of the complex.</text>
</comment>
<comment type="subcellular location">
    <subcellularLocation>
        <location evidence="1">Virion membrane</location>
        <topology evidence="1">Single-pass type III membrane protein</topology>
    </subcellularLocation>
    <text evidence="1">Component of the mature virion (MV) membrane. The mature virion is located in the cytoplasm of infected cells and is probably released by cell lysis.</text>
</comment>
<comment type="induction">
    <text evidence="1">Expressed in the late phase of the viral replicative cycle.</text>
</comment>
<comment type="PTM">
    <text evidence="1">Most cysteines are linked by disulfide bonds. They are created by the viral disulfide bond formation pathway, a poxvirus-specific redox pathway that operates on the cytoplasmic side of the MV membranes.</text>
</comment>
<comment type="PTM">
    <text evidence="1">Unglycosylated because produced in viral factories instead of the classic ER -Golgi route.</text>
</comment>
<comment type="similarity">
    <text evidence="3">Belongs to the orthopoxvirus OPG099 family.</text>
</comment>
<name>PG099_VACCA</name>
<dbReference type="EMBL" id="U94848">
    <property type="protein sequence ID" value="AAB96501.1"/>
    <property type="molecule type" value="Genomic_DNA"/>
</dbReference>
<dbReference type="EMBL" id="AY603355">
    <property type="protein sequence ID" value="AAT10482.1"/>
    <property type="molecule type" value="Genomic_DNA"/>
</dbReference>
<dbReference type="PIR" id="T37360">
    <property type="entry name" value="T37360"/>
</dbReference>
<dbReference type="SMR" id="O57201"/>
<dbReference type="Proteomes" id="UP000159908">
    <property type="component" value="Segment"/>
</dbReference>
<dbReference type="Proteomes" id="UP000172909">
    <property type="component" value="Segment"/>
</dbReference>
<dbReference type="GO" id="GO:0016020">
    <property type="term" value="C:membrane"/>
    <property type="evidence" value="ECO:0007669"/>
    <property type="project" value="UniProtKB-KW"/>
</dbReference>
<dbReference type="GO" id="GO:0019031">
    <property type="term" value="C:viral envelope"/>
    <property type="evidence" value="ECO:0007669"/>
    <property type="project" value="UniProtKB-KW"/>
</dbReference>
<dbReference type="GO" id="GO:0055036">
    <property type="term" value="C:virion membrane"/>
    <property type="evidence" value="ECO:0007669"/>
    <property type="project" value="UniProtKB-SubCell"/>
</dbReference>
<dbReference type="GO" id="GO:0019064">
    <property type="term" value="P:fusion of virus membrane with host plasma membrane"/>
    <property type="evidence" value="ECO:0007669"/>
    <property type="project" value="UniProtKB-KW"/>
</dbReference>
<dbReference type="GO" id="GO:0046718">
    <property type="term" value="P:symbiont entry into host cell"/>
    <property type="evidence" value="ECO:0007669"/>
    <property type="project" value="UniProtKB-KW"/>
</dbReference>
<dbReference type="InterPro" id="IPR006956">
    <property type="entry name" value="Poxvirus_L5"/>
</dbReference>
<dbReference type="Pfam" id="PF04872">
    <property type="entry name" value="Pox_L5"/>
    <property type="match status" value="1"/>
</dbReference>
<sequence length="128" mass="15058">MENVPNVYFNPVFIEPTFKHSLLSVYKHRLIVLFEVFIVFILIYVFFRSELNMFFMPKRKIPDPIDRLRRANLACEDDKLMIYGLPWMTTQTSALSINSKPIVYKDCAKLLRSINGSQPVSLNDVLRR</sequence>
<accession>O57201</accession>
<reference key="1">
    <citation type="journal article" date="1998" name="Virology">
        <title>The complete genomic sequence of the modified vaccinia Ankara strain: comparison with other orthopoxviruses.</title>
        <authorList>
            <person name="Antoine G."/>
            <person name="Scheiflinger F."/>
            <person name="Dorner F."/>
            <person name="Falkner F.G."/>
        </authorList>
    </citation>
    <scope>NUCLEOTIDE SEQUENCE [LARGE SCALE GENOMIC DNA]</scope>
</reference>
<reference key="2">
    <citation type="submission" date="2004-04" db="EMBL/GenBank/DDBJ databases">
        <authorList>
            <person name="Esposito J.J."/>
            <person name="Frace M."/>
            <person name="Sammons S.A."/>
            <person name="Olsen-Rasmussen M.S."/>
            <person name="Osborne J."/>
            <person name="Khristova M."/>
            <person name="Wohlhueter R.M."/>
        </authorList>
    </citation>
    <scope>NUCLEOTIDE SEQUENCE [LARGE SCALE GENOMIC DNA]</scope>
    <source>
        <strain>Isolate Acambis 3000</strain>
    </source>
</reference>
<gene>
    <name type="primary">OPG099</name>
    <name type="ordered locus">MVA084R</name>
    <name type="ordered locus">ACAM3000_MVA_084</name>
</gene>
<feature type="chain" id="PRO_0000099625" description="Entry-fusion complex protein OPG094">
    <location>
        <begin position="1"/>
        <end position="128"/>
    </location>
</feature>
<feature type="topological domain" description="Intravirion" evidence="2">
    <location>
        <begin position="1"/>
        <end position="30"/>
    </location>
</feature>
<feature type="transmembrane region" description="Helical; Signal-anchor for type III membrane protein" evidence="2">
    <location>
        <begin position="31"/>
        <end position="51"/>
    </location>
</feature>
<feature type="topological domain" description="Virion surface" evidence="2">
    <location>
        <begin position="52"/>
        <end position="107"/>
    </location>
</feature>
<feature type="disulfide bond" description="By viral enzyme" evidence="1">
    <location>
        <begin position="75"/>
        <end position="107"/>
    </location>
</feature>
<evidence type="ECO:0000250" key="1">
    <source>
        <dbReference type="UniProtKB" id="P68623"/>
    </source>
</evidence>
<evidence type="ECO:0000255" key="2"/>
<evidence type="ECO:0000305" key="3"/>
<keyword id="KW-1015">Disulfide bond</keyword>
<keyword id="KW-1169">Fusion of virus membrane with host cell membrane</keyword>
<keyword id="KW-1168">Fusion of virus membrane with host membrane</keyword>
<keyword id="KW-0426">Late protein</keyword>
<keyword id="KW-0472">Membrane</keyword>
<keyword id="KW-0735">Signal-anchor</keyword>
<keyword id="KW-0812">Transmembrane</keyword>
<keyword id="KW-1133">Transmembrane helix</keyword>
<keyword id="KW-0261">Viral envelope protein</keyword>
<keyword id="KW-1162">Viral penetration into host cytoplasm</keyword>
<keyword id="KW-0946">Virion</keyword>
<keyword id="KW-1160">Virus entry into host cell</keyword>